<comment type="function">
    <text evidence="1">Catalyzes the conversion of acetate into acetyl-CoA (AcCoA), an essential intermediate at the junction of anabolic and catabolic pathways. AcsA undergoes a two-step reaction. In the first half reaction, AcsA combines acetate with ATP to form acetyl-adenylate (AcAMP) intermediate. In the second half reaction, it can then transfer the acetyl group from AcAMP to the sulfhydryl group of CoA, forming the product AcCoA.</text>
</comment>
<comment type="catalytic activity">
    <reaction evidence="1">
        <text>acetate + ATP + CoA = acetyl-CoA + AMP + diphosphate</text>
        <dbReference type="Rhea" id="RHEA:23176"/>
        <dbReference type="ChEBI" id="CHEBI:30089"/>
        <dbReference type="ChEBI" id="CHEBI:30616"/>
        <dbReference type="ChEBI" id="CHEBI:33019"/>
        <dbReference type="ChEBI" id="CHEBI:57287"/>
        <dbReference type="ChEBI" id="CHEBI:57288"/>
        <dbReference type="ChEBI" id="CHEBI:456215"/>
        <dbReference type="EC" id="6.2.1.1"/>
    </reaction>
</comment>
<comment type="cofactor">
    <cofactor evidence="1">
        <name>Mg(2+)</name>
        <dbReference type="ChEBI" id="CHEBI:18420"/>
    </cofactor>
</comment>
<comment type="PTM">
    <text evidence="1">Acetylated. Deacetylation by the SIR2-homolog deacetylase activates the enzyme.</text>
</comment>
<comment type="similarity">
    <text evidence="1">Belongs to the ATP-dependent AMP-binding enzyme family.</text>
</comment>
<proteinExistence type="inferred from homology"/>
<dbReference type="EC" id="6.2.1.1" evidence="1"/>
<dbReference type="EMBL" id="AE016853">
    <property type="protein sequence ID" value="AAO55344.1"/>
    <property type="molecule type" value="Genomic_DNA"/>
</dbReference>
<dbReference type="RefSeq" id="NP_791649.1">
    <property type="nucleotide sequence ID" value="NC_004578.1"/>
</dbReference>
<dbReference type="RefSeq" id="WP_007245081.1">
    <property type="nucleotide sequence ID" value="NC_004578.1"/>
</dbReference>
<dbReference type="SMR" id="Q885K7"/>
<dbReference type="STRING" id="223283.PSPTO_1825"/>
<dbReference type="GeneID" id="1183466"/>
<dbReference type="KEGG" id="pst:PSPTO_1825"/>
<dbReference type="PATRIC" id="fig|223283.9.peg.1855"/>
<dbReference type="eggNOG" id="COG0365">
    <property type="taxonomic scope" value="Bacteria"/>
</dbReference>
<dbReference type="HOGENOM" id="CLU_000022_3_6_6"/>
<dbReference type="OrthoDB" id="9803968at2"/>
<dbReference type="PhylomeDB" id="Q885K7"/>
<dbReference type="Proteomes" id="UP000002515">
    <property type="component" value="Chromosome"/>
</dbReference>
<dbReference type="GO" id="GO:0005829">
    <property type="term" value="C:cytosol"/>
    <property type="evidence" value="ECO:0007669"/>
    <property type="project" value="TreeGrafter"/>
</dbReference>
<dbReference type="GO" id="GO:0003987">
    <property type="term" value="F:acetate-CoA ligase activity"/>
    <property type="evidence" value="ECO:0007669"/>
    <property type="project" value="UniProtKB-UniRule"/>
</dbReference>
<dbReference type="GO" id="GO:0016208">
    <property type="term" value="F:AMP binding"/>
    <property type="evidence" value="ECO:0007669"/>
    <property type="project" value="InterPro"/>
</dbReference>
<dbReference type="GO" id="GO:0005524">
    <property type="term" value="F:ATP binding"/>
    <property type="evidence" value="ECO:0007669"/>
    <property type="project" value="UniProtKB-KW"/>
</dbReference>
<dbReference type="GO" id="GO:0046872">
    <property type="term" value="F:metal ion binding"/>
    <property type="evidence" value="ECO:0007669"/>
    <property type="project" value="UniProtKB-KW"/>
</dbReference>
<dbReference type="GO" id="GO:0019427">
    <property type="term" value="P:acetyl-CoA biosynthetic process from acetate"/>
    <property type="evidence" value="ECO:0007669"/>
    <property type="project" value="InterPro"/>
</dbReference>
<dbReference type="CDD" id="cd05966">
    <property type="entry name" value="ACS"/>
    <property type="match status" value="1"/>
</dbReference>
<dbReference type="FunFam" id="3.30.300.30:FF:000004">
    <property type="entry name" value="Acetyl-coenzyme A synthetase"/>
    <property type="match status" value="1"/>
</dbReference>
<dbReference type="FunFam" id="3.40.50.12780:FF:000001">
    <property type="entry name" value="Acetyl-coenzyme A synthetase"/>
    <property type="match status" value="1"/>
</dbReference>
<dbReference type="Gene3D" id="3.30.300.30">
    <property type="match status" value="1"/>
</dbReference>
<dbReference type="Gene3D" id="3.40.50.12780">
    <property type="entry name" value="N-terminal domain of ligase-like"/>
    <property type="match status" value="1"/>
</dbReference>
<dbReference type="HAMAP" id="MF_01123">
    <property type="entry name" value="Ac_CoA_synth"/>
    <property type="match status" value="1"/>
</dbReference>
<dbReference type="InterPro" id="IPR011904">
    <property type="entry name" value="Ac_CoA_lig"/>
</dbReference>
<dbReference type="InterPro" id="IPR032387">
    <property type="entry name" value="ACAS_N"/>
</dbReference>
<dbReference type="InterPro" id="IPR025110">
    <property type="entry name" value="AMP-bd_C"/>
</dbReference>
<dbReference type="InterPro" id="IPR045851">
    <property type="entry name" value="AMP-bd_C_sf"/>
</dbReference>
<dbReference type="InterPro" id="IPR020845">
    <property type="entry name" value="AMP-binding_CS"/>
</dbReference>
<dbReference type="InterPro" id="IPR000873">
    <property type="entry name" value="AMP-dep_synth/lig_dom"/>
</dbReference>
<dbReference type="InterPro" id="IPR042099">
    <property type="entry name" value="ANL_N_sf"/>
</dbReference>
<dbReference type="NCBIfam" id="TIGR02188">
    <property type="entry name" value="Ac_CoA_lig_AcsA"/>
    <property type="match status" value="1"/>
</dbReference>
<dbReference type="NCBIfam" id="NF001208">
    <property type="entry name" value="PRK00174.1"/>
    <property type="match status" value="1"/>
</dbReference>
<dbReference type="PANTHER" id="PTHR24095">
    <property type="entry name" value="ACETYL-COENZYME A SYNTHETASE"/>
    <property type="match status" value="1"/>
</dbReference>
<dbReference type="PANTHER" id="PTHR24095:SF243">
    <property type="entry name" value="ACETYL-COENZYME A SYNTHETASE"/>
    <property type="match status" value="1"/>
</dbReference>
<dbReference type="Pfam" id="PF16177">
    <property type="entry name" value="ACAS_N"/>
    <property type="match status" value="1"/>
</dbReference>
<dbReference type="Pfam" id="PF00501">
    <property type="entry name" value="AMP-binding"/>
    <property type="match status" value="1"/>
</dbReference>
<dbReference type="Pfam" id="PF13193">
    <property type="entry name" value="AMP-binding_C"/>
    <property type="match status" value="1"/>
</dbReference>
<dbReference type="SUPFAM" id="SSF56801">
    <property type="entry name" value="Acetyl-CoA synthetase-like"/>
    <property type="match status" value="1"/>
</dbReference>
<dbReference type="PROSITE" id="PS00455">
    <property type="entry name" value="AMP_BINDING"/>
    <property type="match status" value="1"/>
</dbReference>
<organism>
    <name type="scientific">Pseudomonas syringae pv. tomato (strain ATCC BAA-871 / DC3000)</name>
    <dbReference type="NCBI Taxonomy" id="223283"/>
    <lineage>
        <taxon>Bacteria</taxon>
        <taxon>Pseudomonadati</taxon>
        <taxon>Pseudomonadota</taxon>
        <taxon>Gammaproteobacteria</taxon>
        <taxon>Pseudomonadales</taxon>
        <taxon>Pseudomonadaceae</taxon>
        <taxon>Pseudomonas</taxon>
    </lineage>
</organism>
<reference key="1">
    <citation type="journal article" date="2003" name="Proc. Natl. Acad. Sci. U.S.A.">
        <title>The complete genome sequence of the Arabidopsis and tomato pathogen Pseudomonas syringae pv. tomato DC3000.</title>
        <authorList>
            <person name="Buell C.R."/>
            <person name="Joardar V."/>
            <person name="Lindeberg M."/>
            <person name="Selengut J."/>
            <person name="Paulsen I.T."/>
            <person name="Gwinn M.L."/>
            <person name="Dodson R.J."/>
            <person name="DeBoy R.T."/>
            <person name="Durkin A.S."/>
            <person name="Kolonay J.F."/>
            <person name="Madupu R."/>
            <person name="Daugherty S.C."/>
            <person name="Brinkac L.M."/>
            <person name="Beanan M.J."/>
            <person name="Haft D.H."/>
            <person name="Nelson W.C."/>
            <person name="Davidsen T.M."/>
            <person name="Zafar N."/>
            <person name="Zhou L."/>
            <person name="Liu J."/>
            <person name="Yuan Q."/>
            <person name="Khouri H.M."/>
            <person name="Fedorova N.B."/>
            <person name="Tran B."/>
            <person name="Russell D."/>
            <person name="Berry K.J."/>
            <person name="Utterback T.R."/>
            <person name="Van Aken S.E."/>
            <person name="Feldblyum T.V."/>
            <person name="D'Ascenzo M."/>
            <person name="Deng W.-L."/>
            <person name="Ramos A.R."/>
            <person name="Alfano J.R."/>
            <person name="Cartinhour S."/>
            <person name="Chatterjee A.K."/>
            <person name="Delaney T.P."/>
            <person name="Lazarowitz S.G."/>
            <person name="Martin G.B."/>
            <person name="Schneider D.J."/>
            <person name="Tang X."/>
            <person name="Bender C.L."/>
            <person name="White O."/>
            <person name="Fraser C.M."/>
            <person name="Collmer A."/>
        </authorList>
    </citation>
    <scope>NUCLEOTIDE SEQUENCE [LARGE SCALE GENOMIC DNA]</scope>
    <source>
        <strain>ATCC BAA-871 / DC3000</strain>
    </source>
</reference>
<name>ACSA_PSESM</name>
<sequence>MSAASLYPVRPEVAATTLTDEATYKAMYQQSVVNPDGFWREQAQRLDWIKPFSVVKQTSFDDHRVDIKWFADGTLNVAYNCLDRHLAERGDTIAIIWEGDDPSEHREITYRELHEEVCKFANALRGQDVHRGDVVTIYMPMIPEAVVAMLACARIGAIHSVVFGGFSPEALAGRIIDCSSKVVITADEGLRGGKKTALKANVDRALTNPETSSVQKVIVCKRTGGEIEWNRHRDIWYHALLEVASSTCAPKEMGAEESLFILYTSGSTGKPKGVLHTTAGYLLYAALTHERVFDYKPGEIYWCTADVGWVTGHSYIVYGPLANGATTLLFEGVPNYPDITRVSKIIDKHKVNILYTAPTAIRAMMAEGTKSVEGADGSSLRLLGSVGEPINPEAWGWYYNTVGKQNCPIVDTWWQTETGGILISPLPGATALKPGSATRPFFGVIPALVDNLGNLIEGAAEGNLVILDSWPGQSRTLYGDHDRFVDTYFKTFRGMYFTGDGARRDEDGYYWITGRVDDVLNVSGHRMGTAEIESAMVAHPKVAEAAVVGVPHDLKGQGIYVYVTLNAGEEPSDALRTELRNWVRKEIGPIASPDFIQWAPGLPKTRSGKIMRRILRKIATAEYDALGDISTLADPGVVQHLIETHKSMSAA</sequence>
<gene>
    <name evidence="1" type="primary">acsA</name>
    <name type="synonym">acs</name>
    <name type="ordered locus">PSPTO_1825</name>
</gene>
<evidence type="ECO:0000255" key="1">
    <source>
        <dbReference type="HAMAP-Rule" id="MF_01123"/>
    </source>
</evidence>
<feature type="chain" id="PRO_0000208378" description="Acetyl-coenzyme A synthetase">
    <location>
        <begin position="1"/>
        <end position="651"/>
    </location>
</feature>
<feature type="binding site" evidence="1">
    <location>
        <begin position="191"/>
        <end position="194"/>
    </location>
    <ligand>
        <name>CoA</name>
        <dbReference type="ChEBI" id="CHEBI:57287"/>
    </ligand>
</feature>
<feature type="binding site" evidence="1">
    <location>
        <position position="311"/>
    </location>
    <ligand>
        <name>CoA</name>
        <dbReference type="ChEBI" id="CHEBI:57287"/>
    </ligand>
</feature>
<feature type="binding site" evidence="1">
    <location>
        <position position="335"/>
    </location>
    <ligand>
        <name>CoA</name>
        <dbReference type="ChEBI" id="CHEBI:57287"/>
    </ligand>
</feature>
<feature type="binding site" evidence="1">
    <location>
        <begin position="387"/>
        <end position="389"/>
    </location>
    <ligand>
        <name>ATP</name>
        <dbReference type="ChEBI" id="CHEBI:30616"/>
    </ligand>
</feature>
<feature type="binding site" evidence="1">
    <location>
        <begin position="411"/>
        <end position="416"/>
    </location>
    <ligand>
        <name>ATP</name>
        <dbReference type="ChEBI" id="CHEBI:30616"/>
    </ligand>
</feature>
<feature type="binding site" evidence="1">
    <location>
        <position position="500"/>
    </location>
    <ligand>
        <name>ATP</name>
        <dbReference type="ChEBI" id="CHEBI:30616"/>
    </ligand>
</feature>
<feature type="binding site" evidence="1">
    <location>
        <position position="515"/>
    </location>
    <ligand>
        <name>ATP</name>
        <dbReference type="ChEBI" id="CHEBI:30616"/>
    </ligand>
</feature>
<feature type="binding site" evidence="1">
    <location>
        <position position="523"/>
    </location>
    <ligand>
        <name>CoA</name>
        <dbReference type="ChEBI" id="CHEBI:57287"/>
    </ligand>
</feature>
<feature type="binding site" evidence="1">
    <location>
        <position position="526"/>
    </location>
    <ligand>
        <name>ATP</name>
        <dbReference type="ChEBI" id="CHEBI:30616"/>
    </ligand>
</feature>
<feature type="binding site" evidence="1">
    <location>
        <position position="537"/>
    </location>
    <ligand>
        <name>Mg(2+)</name>
        <dbReference type="ChEBI" id="CHEBI:18420"/>
    </ligand>
</feature>
<feature type="binding site" evidence="1">
    <location>
        <position position="539"/>
    </location>
    <ligand>
        <name>Mg(2+)</name>
        <dbReference type="ChEBI" id="CHEBI:18420"/>
    </ligand>
</feature>
<feature type="binding site" evidence="1">
    <location>
        <position position="542"/>
    </location>
    <ligand>
        <name>Mg(2+)</name>
        <dbReference type="ChEBI" id="CHEBI:18420"/>
    </ligand>
</feature>
<feature type="binding site" evidence="1">
    <location>
        <position position="584"/>
    </location>
    <ligand>
        <name>CoA</name>
        <dbReference type="ChEBI" id="CHEBI:57287"/>
    </ligand>
</feature>
<feature type="modified residue" description="N6-acetyllysine" evidence="1">
    <location>
        <position position="609"/>
    </location>
</feature>
<protein>
    <recommendedName>
        <fullName evidence="1">Acetyl-coenzyme A synthetase</fullName>
        <shortName evidence="1">AcCoA synthetase</shortName>
        <shortName evidence="1">Acs</shortName>
        <ecNumber evidence="1">6.2.1.1</ecNumber>
    </recommendedName>
    <alternativeName>
        <fullName evidence="1">Acetate--CoA ligase</fullName>
    </alternativeName>
    <alternativeName>
        <fullName evidence="1">Acyl-activating enzyme</fullName>
    </alternativeName>
</protein>
<accession>Q885K7</accession>
<keyword id="KW-0007">Acetylation</keyword>
<keyword id="KW-0067">ATP-binding</keyword>
<keyword id="KW-0436">Ligase</keyword>
<keyword id="KW-0460">Magnesium</keyword>
<keyword id="KW-0479">Metal-binding</keyword>
<keyword id="KW-0547">Nucleotide-binding</keyword>
<keyword id="KW-1185">Reference proteome</keyword>